<dbReference type="EMBL" id="AF376850">
    <property type="protein sequence ID" value="AAK57669.1"/>
    <property type="molecule type" value="Genomic_DNA"/>
</dbReference>
<dbReference type="GO" id="GO:0005743">
    <property type="term" value="C:mitochondrial inner membrane"/>
    <property type="evidence" value="ECO:0007669"/>
    <property type="project" value="UniProtKB-SubCell"/>
</dbReference>
<dbReference type="GO" id="GO:0045275">
    <property type="term" value="C:respiratory chain complex III"/>
    <property type="evidence" value="ECO:0007669"/>
    <property type="project" value="InterPro"/>
</dbReference>
<dbReference type="GO" id="GO:0046872">
    <property type="term" value="F:metal ion binding"/>
    <property type="evidence" value="ECO:0007669"/>
    <property type="project" value="UniProtKB-KW"/>
</dbReference>
<dbReference type="GO" id="GO:0008121">
    <property type="term" value="F:ubiquinol-cytochrome-c reductase activity"/>
    <property type="evidence" value="ECO:0007669"/>
    <property type="project" value="InterPro"/>
</dbReference>
<dbReference type="GO" id="GO:0006122">
    <property type="term" value="P:mitochondrial electron transport, ubiquinol to cytochrome c"/>
    <property type="evidence" value="ECO:0007669"/>
    <property type="project" value="TreeGrafter"/>
</dbReference>
<dbReference type="CDD" id="cd00290">
    <property type="entry name" value="cytochrome_b_C"/>
    <property type="match status" value="1"/>
</dbReference>
<dbReference type="CDD" id="cd00284">
    <property type="entry name" value="Cytochrome_b_N"/>
    <property type="match status" value="1"/>
</dbReference>
<dbReference type="FunFam" id="1.20.810.10:FF:000002">
    <property type="entry name" value="Cytochrome b"/>
    <property type="match status" value="1"/>
</dbReference>
<dbReference type="Gene3D" id="1.20.810.10">
    <property type="entry name" value="Cytochrome Bc1 Complex, Chain C"/>
    <property type="match status" value="1"/>
</dbReference>
<dbReference type="InterPro" id="IPR005798">
    <property type="entry name" value="Cyt_b/b6_C"/>
</dbReference>
<dbReference type="InterPro" id="IPR036150">
    <property type="entry name" value="Cyt_b/b6_C_sf"/>
</dbReference>
<dbReference type="InterPro" id="IPR005797">
    <property type="entry name" value="Cyt_b/b6_N"/>
</dbReference>
<dbReference type="InterPro" id="IPR027387">
    <property type="entry name" value="Cytb/b6-like_sf"/>
</dbReference>
<dbReference type="InterPro" id="IPR030689">
    <property type="entry name" value="Cytochrome_b"/>
</dbReference>
<dbReference type="InterPro" id="IPR048260">
    <property type="entry name" value="Cytochrome_b_C_euk/bac"/>
</dbReference>
<dbReference type="InterPro" id="IPR048259">
    <property type="entry name" value="Cytochrome_b_N_euk/bac"/>
</dbReference>
<dbReference type="InterPro" id="IPR016174">
    <property type="entry name" value="Di-haem_cyt_TM"/>
</dbReference>
<dbReference type="PANTHER" id="PTHR19271">
    <property type="entry name" value="CYTOCHROME B"/>
    <property type="match status" value="1"/>
</dbReference>
<dbReference type="PANTHER" id="PTHR19271:SF16">
    <property type="entry name" value="CYTOCHROME B"/>
    <property type="match status" value="1"/>
</dbReference>
<dbReference type="Pfam" id="PF00032">
    <property type="entry name" value="Cytochrom_B_C"/>
    <property type="match status" value="1"/>
</dbReference>
<dbReference type="Pfam" id="PF00033">
    <property type="entry name" value="Cytochrome_B"/>
    <property type="match status" value="1"/>
</dbReference>
<dbReference type="PIRSF" id="PIRSF038885">
    <property type="entry name" value="COB"/>
    <property type="match status" value="1"/>
</dbReference>
<dbReference type="SUPFAM" id="SSF81648">
    <property type="entry name" value="a domain/subunit of cytochrome bc1 complex (Ubiquinol-cytochrome c reductase)"/>
    <property type="match status" value="1"/>
</dbReference>
<dbReference type="SUPFAM" id="SSF81342">
    <property type="entry name" value="Transmembrane di-heme cytochromes"/>
    <property type="match status" value="1"/>
</dbReference>
<dbReference type="PROSITE" id="PS51003">
    <property type="entry name" value="CYTB_CTER"/>
    <property type="match status" value="1"/>
</dbReference>
<dbReference type="PROSITE" id="PS51002">
    <property type="entry name" value="CYTB_NTER"/>
    <property type="match status" value="1"/>
</dbReference>
<proteinExistence type="inferred from homology"/>
<evidence type="ECO:0000250" key="1"/>
<evidence type="ECO:0000250" key="2">
    <source>
        <dbReference type="UniProtKB" id="P00157"/>
    </source>
</evidence>
<evidence type="ECO:0000255" key="3">
    <source>
        <dbReference type="PROSITE-ProRule" id="PRU00967"/>
    </source>
</evidence>
<evidence type="ECO:0000255" key="4">
    <source>
        <dbReference type="PROSITE-ProRule" id="PRU00968"/>
    </source>
</evidence>
<protein>
    <recommendedName>
        <fullName>Cytochrome b</fullName>
    </recommendedName>
    <alternativeName>
        <fullName>Complex III subunit 3</fullName>
    </alternativeName>
    <alternativeName>
        <fullName>Complex III subunit III</fullName>
    </alternativeName>
    <alternativeName>
        <fullName>Cytochrome b-c1 complex subunit 3</fullName>
    </alternativeName>
    <alternativeName>
        <fullName>Ubiquinol-cytochrome-c reductase complex cytochrome b subunit</fullName>
    </alternativeName>
</protein>
<name>CYB_MYOHA</name>
<organism>
    <name type="scientific">Myotis hasseltii</name>
    <name type="common">Lesser large-footed bat</name>
    <name type="synonym">Van Hasselt's large-footed bat</name>
    <dbReference type="NCBI Taxonomy" id="159326"/>
    <lineage>
        <taxon>Eukaryota</taxon>
        <taxon>Metazoa</taxon>
        <taxon>Chordata</taxon>
        <taxon>Craniata</taxon>
        <taxon>Vertebrata</taxon>
        <taxon>Euteleostomi</taxon>
        <taxon>Mammalia</taxon>
        <taxon>Eutheria</taxon>
        <taxon>Laurasiatheria</taxon>
        <taxon>Chiroptera</taxon>
        <taxon>Yangochiroptera</taxon>
        <taxon>Vespertilionidae</taxon>
        <taxon>Myotis</taxon>
    </lineage>
</organism>
<geneLocation type="mitochondrion"/>
<reference key="1">
    <citation type="journal article" date="2001" name="Mol. Phylogenet. Evol.">
        <title>Molecular systematics of bats of the genus Myotis (Vespertilionidae) suggests deterministic ecomorphological convergences.</title>
        <authorList>
            <person name="Ruedi M."/>
            <person name="Mayer F."/>
        </authorList>
    </citation>
    <scope>NUCLEOTIDE SEQUENCE [GENOMIC DNA]</scope>
    <source>
        <strain>Isolate SMF 69345</strain>
    </source>
</reference>
<feature type="chain" id="PRO_0000254726" description="Cytochrome b">
    <location>
        <begin position="1"/>
        <end position="379"/>
    </location>
</feature>
<feature type="transmembrane region" description="Helical" evidence="2">
    <location>
        <begin position="33"/>
        <end position="53"/>
    </location>
</feature>
<feature type="transmembrane region" description="Helical" evidence="2">
    <location>
        <begin position="77"/>
        <end position="98"/>
    </location>
</feature>
<feature type="transmembrane region" description="Helical" evidence="2">
    <location>
        <begin position="113"/>
        <end position="133"/>
    </location>
</feature>
<feature type="transmembrane region" description="Helical" evidence="2">
    <location>
        <begin position="178"/>
        <end position="198"/>
    </location>
</feature>
<feature type="transmembrane region" description="Helical" evidence="2">
    <location>
        <begin position="226"/>
        <end position="246"/>
    </location>
</feature>
<feature type="transmembrane region" description="Helical" evidence="2">
    <location>
        <begin position="288"/>
        <end position="308"/>
    </location>
</feature>
<feature type="transmembrane region" description="Helical" evidence="2">
    <location>
        <begin position="320"/>
        <end position="340"/>
    </location>
</feature>
<feature type="transmembrane region" description="Helical" evidence="2">
    <location>
        <begin position="347"/>
        <end position="367"/>
    </location>
</feature>
<feature type="binding site" description="axial binding residue" evidence="2">
    <location>
        <position position="83"/>
    </location>
    <ligand>
        <name>heme b</name>
        <dbReference type="ChEBI" id="CHEBI:60344"/>
        <label>b562</label>
    </ligand>
    <ligandPart>
        <name>Fe</name>
        <dbReference type="ChEBI" id="CHEBI:18248"/>
    </ligandPart>
</feature>
<feature type="binding site" description="axial binding residue" evidence="2">
    <location>
        <position position="97"/>
    </location>
    <ligand>
        <name>heme b</name>
        <dbReference type="ChEBI" id="CHEBI:60344"/>
        <label>b566</label>
    </ligand>
    <ligandPart>
        <name>Fe</name>
        <dbReference type="ChEBI" id="CHEBI:18248"/>
    </ligandPart>
</feature>
<feature type="binding site" description="axial binding residue" evidence="2">
    <location>
        <position position="182"/>
    </location>
    <ligand>
        <name>heme b</name>
        <dbReference type="ChEBI" id="CHEBI:60344"/>
        <label>b562</label>
    </ligand>
    <ligandPart>
        <name>Fe</name>
        <dbReference type="ChEBI" id="CHEBI:18248"/>
    </ligandPart>
</feature>
<feature type="binding site" description="axial binding residue" evidence="2">
    <location>
        <position position="196"/>
    </location>
    <ligand>
        <name>heme b</name>
        <dbReference type="ChEBI" id="CHEBI:60344"/>
        <label>b566</label>
    </ligand>
    <ligandPart>
        <name>Fe</name>
        <dbReference type="ChEBI" id="CHEBI:18248"/>
    </ligandPart>
</feature>
<feature type="binding site" evidence="2">
    <location>
        <position position="201"/>
    </location>
    <ligand>
        <name>a ubiquinone</name>
        <dbReference type="ChEBI" id="CHEBI:16389"/>
    </ligand>
</feature>
<gene>
    <name type="primary">MT-CYB</name>
    <name type="synonym">COB</name>
    <name type="synonym">CYTB</name>
    <name type="synonym">MTCYB</name>
</gene>
<sequence>MTNIRKSHPLMKIINNSFIDLPAPSNISSWWNFGSLLGICLTLQILTGLFLAMHYTSDTATAFNSVTHICRDVNYGWVLRYLHANGASMFFICLYLHVGRGLYYGSYLYTETWNIGIILLFAVMATAFMGYVLPWGQMSFWGATVITNLLSAIPYIGTDLVEWIWGGFSVDKATLTRFFAFHFLLPFIISAMVMVHLLFLHETGSNNPTGIPSNMDMIPFHPYYTIKDILGLLLMIVVLLVLVLFSPDMLGDPDNYMPANPXNTPPHIKPEWYFLFAYAILRSIPNKLGGVLALVLSILILAIIPLLHTSKQRSMAFRPLSQCLFWLLVADLLTLTWIGGQPVEHPYVIIGQLASILYFCIIIILMPLAGLVENHLLKW</sequence>
<accession>Q957B2</accession>
<keyword id="KW-0249">Electron transport</keyword>
<keyword id="KW-0349">Heme</keyword>
<keyword id="KW-0408">Iron</keyword>
<keyword id="KW-0472">Membrane</keyword>
<keyword id="KW-0479">Metal-binding</keyword>
<keyword id="KW-0496">Mitochondrion</keyword>
<keyword id="KW-0999">Mitochondrion inner membrane</keyword>
<keyword id="KW-0679">Respiratory chain</keyword>
<keyword id="KW-0812">Transmembrane</keyword>
<keyword id="KW-1133">Transmembrane helix</keyword>
<keyword id="KW-0813">Transport</keyword>
<keyword id="KW-0830">Ubiquinone</keyword>
<comment type="function">
    <text evidence="2">Component of the ubiquinol-cytochrome c reductase complex (complex III or cytochrome b-c1 complex) that is part of the mitochondrial respiratory chain. The b-c1 complex mediates electron transfer from ubiquinol to cytochrome c. Contributes to the generation of a proton gradient across the mitochondrial membrane that is then used for ATP synthesis.</text>
</comment>
<comment type="cofactor">
    <cofactor evidence="2">
        <name>heme b</name>
        <dbReference type="ChEBI" id="CHEBI:60344"/>
    </cofactor>
    <text evidence="2">Binds 2 heme b groups non-covalently.</text>
</comment>
<comment type="subunit">
    <text evidence="2">The cytochrome bc1 complex contains 11 subunits: 3 respiratory subunits (MT-CYB, CYC1 and UQCRFS1), 2 core proteins (UQCRC1 and UQCRC2) and 6 low-molecular weight proteins (UQCRH/QCR6, UQCRB/QCR7, UQCRQ/QCR8, UQCR10/QCR9, UQCR11/QCR10 and a cleavage product of UQCRFS1). This cytochrome bc1 complex then forms a dimer.</text>
</comment>
<comment type="subcellular location">
    <subcellularLocation>
        <location evidence="2">Mitochondrion inner membrane</location>
        <topology evidence="2">Multi-pass membrane protein</topology>
    </subcellularLocation>
</comment>
<comment type="miscellaneous">
    <text evidence="1">Heme 1 (or BL or b562) is low-potential and absorbs at about 562 nm, and heme 2 (or BH or b566) is high-potential and absorbs at about 566 nm.</text>
</comment>
<comment type="similarity">
    <text evidence="3 4">Belongs to the cytochrome b family.</text>
</comment>
<comment type="caution">
    <text evidence="2">The full-length protein contains only eight transmembrane helices, not nine as predicted by bioinformatics tools.</text>
</comment>